<name>MAN5_ORYSJ</name>
<feature type="signal peptide" evidence="3">
    <location>
        <begin position="1"/>
        <end position="31"/>
    </location>
</feature>
<feature type="chain" id="PRO_0000277486" description="Putative mannan endo-1,4-beta-mannosidase 5">
    <location>
        <begin position="32"/>
        <end position="491"/>
    </location>
</feature>
<feature type="active site" description="Proton donor" evidence="2">
    <location>
        <position position="249"/>
    </location>
</feature>
<feature type="active site" description="Nucleophile" evidence="2">
    <location>
        <position position="372"/>
    </location>
</feature>
<feature type="binding site" evidence="1">
    <location>
        <position position="134"/>
    </location>
    <ligand>
        <name>substrate</name>
    </ligand>
</feature>
<feature type="binding site" evidence="1">
    <location>
        <position position="248"/>
    </location>
    <ligand>
        <name>substrate</name>
    </ligand>
</feature>
<feature type="binding site" evidence="1">
    <location>
        <position position="330"/>
    </location>
    <ligand>
        <name>substrate</name>
    </ligand>
</feature>
<feature type="binding site" evidence="1">
    <location>
        <position position="416"/>
    </location>
    <ligand>
        <name>substrate</name>
    </ligand>
</feature>
<feature type="glycosylation site" description="N-linked (GlcNAc...) asparagine" evidence="3">
    <location>
        <position position="385"/>
    </location>
</feature>
<feature type="glycosylation site" description="N-linked (GlcNAc...) asparagine" evidence="3">
    <location>
        <position position="471"/>
    </location>
</feature>
<accession>Q5W6G0</accession>
<accession>A0A0N7KKI9</accession>
<dbReference type="EC" id="3.2.1.78"/>
<dbReference type="EMBL" id="AC134344">
    <property type="protein sequence ID" value="AAV44120.1"/>
    <property type="status" value="ALT_INIT"/>
    <property type="molecule type" value="Genomic_DNA"/>
</dbReference>
<dbReference type="EMBL" id="AC136224">
    <property type="protein sequence ID" value="AAV44080.1"/>
    <property type="status" value="ALT_INIT"/>
    <property type="molecule type" value="Genomic_DNA"/>
</dbReference>
<dbReference type="EMBL" id="AP014961">
    <property type="protein sequence ID" value="BAS93345.1"/>
    <property type="molecule type" value="Genomic_DNA"/>
</dbReference>
<dbReference type="SMR" id="Q5W6G0"/>
<dbReference type="FunCoup" id="Q5W6G0">
    <property type="interactions" value="58"/>
</dbReference>
<dbReference type="STRING" id="39947.Q5W6G0"/>
<dbReference type="CAZy" id="GH5">
    <property type="family name" value="Glycoside Hydrolase Family 5"/>
</dbReference>
<dbReference type="GlyCosmos" id="Q5W6G0">
    <property type="glycosylation" value="2 sites, No reported glycans"/>
</dbReference>
<dbReference type="PaxDb" id="39947-Q5W6G0"/>
<dbReference type="EnsemblPlants" id="Os05t0319100-00">
    <property type="protein sequence ID" value="Os05t0319100-00"/>
    <property type="gene ID" value="Os05g0319100"/>
</dbReference>
<dbReference type="Gramene" id="Os05t0319100-00">
    <property type="protein sequence ID" value="Os05t0319100-00"/>
    <property type="gene ID" value="Os05g0319100"/>
</dbReference>
<dbReference type="eggNOG" id="ENOG502QU0Z">
    <property type="taxonomic scope" value="Eukaryota"/>
</dbReference>
<dbReference type="HOGENOM" id="CLU_031603_0_0_1"/>
<dbReference type="InParanoid" id="Q5W6G0"/>
<dbReference type="OMA" id="GEGHFFW"/>
<dbReference type="Proteomes" id="UP000000763">
    <property type="component" value="Chromosome 5"/>
</dbReference>
<dbReference type="Proteomes" id="UP000059680">
    <property type="component" value="Chromosome 5"/>
</dbReference>
<dbReference type="GO" id="GO:0005576">
    <property type="term" value="C:extracellular region"/>
    <property type="evidence" value="ECO:0007669"/>
    <property type="project" value="UniProtKB-SubCell"/>
</dbReference>
<dbReference type="GO" id="GO:0016985">
    <property type="term" value="F:mannan endo-1,4-beta-mannosidase activity"/>
    <property type="evidence" value="ECO:0000318"/>
    <property type="project" value="GO_Central"/>
</dbReference>
<dbReference type="GO" id="GO:0000272">
    <property type="term" value="P:polysaccharide catabolic process"/>
    <property type="evidence" value="ECO:0007669"/>
    <property type="project" value="InterPro"/>
</dbReference>
<dbReference type="FunFam" id="3.20.20.80:FF:000012">
    <property type="entry name" value="Mannan endo-1,4-beta-mannosidase 6"/>
    <property type="match status" value="1"/>
</dbReference>
<dbReference type="Gene3D" id="3.20.20.80">
    <property type="entry name" value="Glycosidases"/>
    <property type="match status" value="1"/>
</dbReference>
<dbReference type="InterPro" id="IPR001547">
    <property type="entry name" value="Glyco_hydro_5"/>
</dbReference>
<dbReference type="InterPro" id="IPR017853">
    <property type="entry name" value="Glycoside_hydrolase_SF"/>
</dbReference>
<dbReference type="InterPro" id="IPR045053">
    <property type="entry name" value="MAN-like"/>
</dbReference>
<dbReference type="PANTHER" id="PTHR31451">
    <property type="match status" value="1"/>
</dbReference>
<dbReference type="PANTHER" id="PTHR31451:SF54">
    <property type="entry name" value="MANNAN ENDO-1,4-BETA-MANNOSIDASE 6"/>
    <property type="match status" value="1"/>
</dbReference>
<dbReference type="Pfam" id="PF00150">
    <property type="entry name" value="Cellulase"/>
    <property type="match status" value="1"/>
</dbReference>
<dbReference type="SUPFAM" id="SSF51445">
    <property type="entry name" value="(Trans)glycosidases"/>
    <property type="match status" value="1"/>
</dbReference>
<reference key="1">
    <citation type="journal article" date="2005" name="Mol. Genet. Genomics">
        <title>A fine physical map of the rice chromosome 5.</title>
        <authorList>
            <person name="Cheng C.-H."/>
            <person name="Chung M.C."/>
            <person name="Liu S.-M."/>
            <person name="Chen S.-K."/>
            <person name="Kao F.Y."/>
            <person name="Lin S.-J."/>
            <person name="Hsiao S.-H."/>
            <person name="Tseng I.C."/>
            <person name="Hsing Y.-I.C."/>
            <person name="Wu H.-P."/>
            <person name="Chen C.-S."/>
            <person name="Shaw J.-F."/>
            <person name="Wu J."/>
            <person name="Matsumoto T."/>
            <person name="Sasaki T."/>
            <person name="Chen H.-C."/>
            <person name="Chow T.-Y."/>
        </authorList>
    </citation>
    <scope>NUCLEOTIDE SEQUENCE [LARGE SCALE GENOMIC DNA]</scope>
    <source>
        <strain>cv. Nipponbare</strain>
    </source>
</reference>
<reference key="2">
    <citation type="journal article" date="2005" name="Nature">
        <title>The map-based sequence of the rice genome.</title>
        <authorList>
            <consortium name="International rice genome sequencing project (IRGSP)"/>
        </authorList>
    </citation>
    <scope>NUCLEOTIDE SEQUENCE [LARGE SCALE GENOMIC DNA]</scope>
    <source>
        <strain>cv. Nipponbare</strain>
    </source>
</reference>
<reference key="3">
    <citation type="journal article" date="2013" name="Rice">
        <title>Improvement of the Oryza sativa Nipponbare reference genome using next generation sequence and optical map data.</title>
        <authorList>
            <person name="Kawahara Y."/>
            <person name="de la Bastide M."/>
            <person name="Hamilton J.P."/>
            <person name="Kanamori H."/>
            <person name="McCombie W.R."/>
            <person name="Ouyang S."/>
            <person name="Schwartz D.C."/>
            <person name="Tanaka T."/>
            <person name="Wu J."/>
            <person name="Zhou S."/>
            <person name="Childs K.L."/>
            <person name="Davidson R.M."/>
            <person name="Lin H."/>
            <person name="Quesada-Ocampo L."/>
            <person name="Vaillancourt B."/>
            <person name="Sakai H."/>
            <person name="Lee S.S."/>
            <person name="Kim J."/>
            <person name="Numa H."/>
            <person name="Itoh T."/>
            <person name="Buell C.R."/>
            <person name="Matsumoto T."/>
        </authorList>
    </citation>
    <scope>GENOME REANNOTATION</scope>
    <source>
        <strain>cv. Nipponbare</strain>
    </source>
</reference>
<reference key="4">
    <citation type="journal article" date="2007" name="Funct. Integr. Genomics">
        <title>The endo-beta-mannanase gene families in Arabidopsis, rice, and poplar.</title>
        <authorList>
            <person name="Yuan J.S."/>
            <person name="Yang X."/>
            <person name="Lai J."/>
            <person name="Lin H."/>
            <person name="Cheng Z.-M."/>
            <person name="Nonogaki H."/>
            <person name="Chen F."/>
        </authorList>
    </citation>
    <scope>GENE FAMILY</scope>
</reference>
<organism>
    <name type="scientific">Oryza sativa subsp. japonica</name>
    <name type="common">Rice</name>
    <dbReference type="NCBI Taxonomy" id="39947"/>
    <lineage>
        <taxon>Eukaryota</taxon>
        <taxon>Viridiplantae</taxon>
        <taxon>Streptophyta</taxon>
        <taxon>Embryophyta</taxon>
        <taxon>Tracheophyta</taxon>
        <taxon>Spermatophyta</taxon>
        <taxon>Magnoliopsida</taxon>
        <taxon>Liliopsida</taxon>
        <taxon>Poales</taxon>
        <taxon>Poaceae</taxon>
        <taxon>BOP clade</taxon>
        <taxon>Oryzoideae</taxon>
        <taxon>Oryzeae</taxon>
        <taxon>Oryzinae</taxon>
        <taxon>Oryza</taxon>
        <taxon>Oryza sativa</taxon>
    </lineage>
</organism>
<evidence type="ECO:0000250" key="1">
    <source>
        <dbReference type="UniProtKB" id="B4XC07"/>
    </source>
</evidence>
<evidence type="ECO:0000250" key="2">
    <source>
        <dbReference type="UniProtKB" id="Q99036"/>
    </source>
</evidence>
<evidence type="ECO:0000255" key="3"/>
<evidence type="ECO:0000305" key="4"/>
<comment type="catalytic activity">
    <reaction>
        <text>Random hydrolysis of (1-&gt;4)-beta-D-mannosidic linkages in mannans, galactomannans and glucomannans.</text>
        <dbReference type="EC" id="3.2.1.78"/>
    </reaction>
</comment>
<comment type="subcellular location">
    <subcellularLocation>
        <location evidence="4">Secreted</location>
    </subcellularLocation>
</comment>
<comment type="tissue specificity">
    <text>Expression not detected.</text>
</comment>
<comment type="similarity">
    <text evidence="4">Belongs to the glycosyl hydrolase 5 (cellulase A) family.</text>
</comment>
<comment type="sequence caution" evidence="4">
    <conflict type="erroneous initiation">
        <sequence resource="EMBL-CDS" id="AAV44080"/>
    </conflict>
</comment>
<comment type="sequence caution" evidence="4">
    <conflict type="erroneous initiation">
        <sequence resource="EMBL-CDS" id="AAV44120"/>
    </conflict>
</comment>
<gene>
    <name type="primary">MAN5</name>
    <name type="ordered locus">Os05g0319100</name>
    <name type="ordered locus">LOC_Os05g25480</name>
    <name type="ORF">OSJNBb0006B22.2</name>
    <name type="ORF">OSJNBb0059K16.9</name>
</gene>
<protein>
    <recommendedName>
        <fullName>Putative mannan endo-1,4-beta-mannosidase 5</fullName>
        <ecNumber>3.2.1.78</ecNumber>
    </recommendedName>
    <alternativeName>
        <fullName>Beta-mannanase 5</fullName>
    </alternativeName>
    <alternativeName>
        <fullName>Endo-beta-1,4-mannanase 5</fullName>
    </alternativeName>
    <alternativeName>
        <fullName>OsMAN5</fullName>
    </alternativeName>
</protein>
<keyword id="KW-0325">Glycoprotein</keyword>
<keyword id="KW-0326">Glycosidase</keyword>
<keyword id="KW-0378">Hydrolase</keyword>
<keyword id="KW-1185">Reference proteome</keyword>
<keyword id="KW-0964">Secreted</keyword>
<keyword id="KW-0732">Signal</keyword>
<sequence>METSYREEEARRKASLLHCIFFFLLGALAMAAAIAVLHESSYWEWRCNRLTDIVVDGDDGDGPSSSEVVDGGGEWGMVRTRGAQFVVGGGRPFYVNGFNTYWLMVLAVDPSTRGKVTEVFRQAAAVGLTVCRTWAFNDGGWRALQKSPGVYDEEVFKALDFVVSEARKHKIRLILPLINNWDDYGGKAQYVRWAQAAAAGAGADAFFSDETVRGYFKSHVTAVLTRVNAYTGVAYRDDPTIMAWELMNEPRCASDPTGDTLQAWIAEMAFHVKSVDPAHLLGVGAEGFYGPSSPPARLRVNPNADVALAGADFVRNHRVLGVDFASVHVYPDTWLPAGATKEAQLRFATSWVEAHIADAEGALGGMPVLFAEFGVSTRGARAAFNATSRDAFIEAVYGAMLRSTRRGGGGAGALLWQVFPEGTDYMDDGYAVVLPRAAATAGIVAAHSRRLQSFNSRCAWSCRWGCNKRDNDTAETTTAEADVDVSFHHEL</sequence>
<proteinExistence type="evidence at transcript level"/>